<feature type="chain" id="PRO_0000319206" description="Formate-dependent phosphoribosylglycinamide formyltransferase">
    <location>
        <begin position="1"/>
        <end position="387"/>
    </location>
</feature>
<feature type="domain" description="ATP-grasp" evidence="1">
    <location>
        <begin position="111"/>
        <end position="301"/>
    </location>
</feature>
<feature type="binding site" evidence="1">
    <location>
        <begin position="15"/>
        <end position="16"/>
    </location>
    <ligand>
        <name>N(1)-(5-phospho-beta-D-ribosyl)glycinamide</name>
        <dbReference type="ChEBI" id="CHEBI:143788"/>
    </ligand>
</feature>
<feature type="binding site" evidence="1">
    <location>
        <position position="75"/>
    </location>
    <ligand>
        <name>N(1)-(5-phospho-beta-D-ribosyl)glycinamide</name>
        <dbReference type="ChEBI" id="CHEBI:143788"/>
    </ligand>
</feature>
<feature type="binding site" evidence="1">
    <location>
        <position position="106"/>
    </location>
    <ligand>
        <name>ATP</name>
        <dbReference type="ChEBI" id="CHEBI:30616"/>
    </ligand>
</feature>
<feature type="binding site" evidence="1">
    <location>
        <position position="147"/>
    </location>
    <ligand>
        <name>ATP</name>
        <dbReference type="ChEBI" id="CHEBI:30616"/>
    </ligand>
</feature>
<feature type="binding site" evidence="1">
    <location>
        <begin position="152"/>
        <end position="157"/>
    </location>
    <ligand>
        <name>ATP</name>
        <dbReference type="ChEBI" id="CHEBI:30616"/>
    </ligand>
</feature>
<feature type="binding site" evidence="1">
    <location>
        <begin position="187"/>
        <end position="190"/>
    </location>
    <ligand>
        <name>ATP</name>
        <dbReference type="ChEBI" id="CHEBI:30616"/>
    </ligand>
</feature>
<feature type="binding site" evidence="1">
    <location>
        <position position="195"/>
    </location>
    <ligand>
        <name>ATP</name>
        <dbReference type="ChEBI" id="CHEBI:30616"/>
    </ligand>
</feature>
<feature type="binding site" evidence="1">
    <location>
        <position position="260"/>
    </location>
    <ligand>
        <name>Mg(2+)</name>
        <dbReference type="ChEBI" id="CHEBI:18420"/>
    </ligand>
</feature>
<feature type="binding site" evidence="1">
    <location>
        <position position="272"/>
    </location>
    <ligand>
        <name>Mg(2+)</name>
        <dbReference type="ChEBI" id="CHEBI:18420"/>
    </ligand>
</feature>
<feature type="binding site" evidence="1">
    <location>
        <position position="279"/>
    </location>
    <ligand>
        <name>N(1)-(5-phospho-beta-D-ribosyl)glycinamide</name>
        <dbReference type="ChEBI" id="CHEBI:143788"/>
    </ligand>
</feature>
<feature type="binding site" evidence="1">
    <location>
        <position position="349"/>
    </location>
    <ligand>
        <name>N(1)-(5-phospho-beta-D-ribosyl)glycinamide</name>
        <dbReference type="ChEBI" id="CHEBI:143788"/>
    </ligand>
</feature>
<feature type="binding site" evidence="1">
    <location>
        <begin position="356"/>
        <end position="357"/>
    </location>
    <ligand>
        <name>N(1)-(5-phospho-beta-D-ribosyl)glycinamide</name>
        <dbReference type="ChEBI" id="CHEBI:143788"/>
    </ligand>
</feature>
<evidence type="ECO:0000255" key="1">
    <source>
        <dbReference type="HAMAP-Rule" id="MF_01643"/>
    </source>
</evidence>
<gene>
    <name evidence="1" type="primary">purT</name>
    <name type="ordered locus">PMN2A_0503</name>
</gene>
<keyword id="KW-0067">ATP-binding</keyword>
<keyword id="KW-0436">Ligase</keyword>
<keyword id="KW-0460">Magnesium</keyword>
<keyword id="KW-0479">Metal-binding</keyword>
<keyword id="KW-0547">Nucleotide-binding</keyword>
<keyword id="KW-0658">Purine biosynthesis</keyword>
<keyword id="KW-1185">Reference proteome</keyword>
<accession>Q46KI4</accession>
<sequence>MNVFPKKIMLLGSGELGKEVAIAAKRLGCYVIACDRYNDAPAMQIADQFNVFNMNNGSELKEVIYKCNPDIIIPEIEALAVDVLKEIEQKITVIPNSRATAITMNRDKIRDLASNELNIRTAKFSYAVNQSELDLHAETIGYPLLIKPVMSSSGKGQSLVKNKNDLAQAWNLAIEKSRGKSNKIILEEFIDFDLEITLLTIRQSNGKTLFCAPIGHEQKNGDYQCSWQPAELTESVLEKAQQIAKRVTDNLGGVGLFGVEFFIKGEEVIFSELSPRPHDTGLVTLISQNLNEFELHLRAVLGIPIPEIVCHEASASRVILASMETTDVAFTGLEQALSQSNTNVFMFGKPSSTEGRRMGVAVAKAETIDEARIKADNAAQSVQFINE</sequence>
<reference key="1">
    <citation type="journal article" date="2007" name="PLoS Genet.">
        <title>Patterns and implications of gene gain and loss in the evolution of Prochlorococcus.</title>
        <authorList>
            <person name="Kettler G.C."/>
            <person name="Martiny A.C."/>
            <person name="Huang K."/>
            <person name="Zucker J."/>
            <person name="Coleman M.L."/>
            <person name="Rodrigue S."/>
            <person name="Chen F."/>
            <person name="Lapidus A."/>
            <person name="Ferriera S."/>
            <person name="Johnson J."/>
            <person name="Steglich C."/>
            <person name="Church G.M."/>
            <person name="Richardson P."/>
            <person name="Chisholm S.W."/>
        </authorList>
    </citation>
    <scope>NUCLEOTIDE SEQUENCE [LARGE SCALE GENOMIC DNA]</scope>
    <source>
        <strain>NATL2A</strain>
    </source>
</reference>
<dbReference type="EC" id="6.3.1.21" evidence="1"/>
<dbReference type="EMBL" id="CP000095">
    <property type="protein sequence ID" value="AAZ57994.1"/>
    <property type="molecule type" value="Genomic_DNA"/>
</dbReference>
<dbReference type="RefSeq" id="WP_011294601.1">
    <property type="nucleotide sequence ID" value="NC_007335.2"/>
</dbReference>
<dbReference type="SMR" id="Q46KI4"/>
<dbReference type="STRING" id="59920.PMN2A_0503"/>
<dbReference type="KEGG" id="pmn:PMN2A_0503"/>
<dbReference type="HOGENOM" id="CLU_011534_1_3_3"/>
<dbReference type="OrthoDB" id="9804625at2"/>
<dbReference type="PhylomeDB" id="Q46KI4"/>
<dbReference type="UniPathway" id="UPA00074">
    <property type="reaction ID" value="UER00127"/>
</dbReference>
<dbReference type="Proteomes" id="UP000002535">
    <property type="component" value="Chromosome"/>
</dbReference>
<dbReference type="GO" id="GO:0005829">
    <property type="term" value="C:cytosol"/>
    <property type="evidence" value="ECO:0007669"/>
    <property type="project" value="TreeGrafter"/>
</dbReference>
<dbReference type="GO" id="GO:0005524">
    <property type="term" value="F:ATP binding"/>
    <property type="evidence" value="ECO:0007669"/>
    <property type="project" value="UniProtKB-UniRule"/>
</dbReference>
<dbReference type="GO" id="GO:0000287">
    <property type="term" value="F:magnesium ion binding"/>
    <property type="evidence" value="ECO:0007669"/>
    <property type="project" value="InterPro"/>
</dbReference>
<dbReference type="GO" id="GO:0043815">
    <property type="term" value="F:phosphoribosylglycinamide formyltransferase 2 activity"/>
    <property type="evidence" value="ECO:0007669"/>
    <property type="project" value="UniProtKB-UniRule"/>
</dbReference>
<dbReference type="GO" id="GO:0004644">
    <property type="term" value="F:phosphoribosylglycinamide formyltransferase activity"/>
    <property type="evidence" value="ECO:0007669"/>
    <property type="project" value="InterPro"/>
</dbReference>
<dbReference type="GO" id="GO:0006189">
    <property type="term" value="P:'de novo' IMP biosynthetic process"/>
    <property type="evidence" value="ECO:0007669"/>
    <property type="project" value="UniProtKB-UniRule"/>
</dbReference>
<dbReference type="Gene3D" id="3.40.50.20">
    <property type="match status" value="1"/>
</dbReference>
<dbReference type="Gene3D" id="3.30.1490.20">
    <property type="entry name" value="ATP-grasp fold, A domain"/>
    <property type="match status" value="1"/>
</dbReference>
<dbReference type="Gene3D" id="3.30.470.20">
    <property type="entry name" value="ATP-grasp fold, B domain"/>
    <property type="match status" value="1"/>
</dbReference>
<dbReference type="HAMAP" id="MF_01643">
    <property type="entry name" value="PurT"/>
    <property type="match status" value="1"/>
</dbReference>
<dbReference type="InterPro" id="IPR011761">
    <property type="entry name" value="ATP-grasp"/>
</dbReference>
<dbReference type="InterPro" id="IPR003135">
    <property type="entry name" value="ATP-grasp_carboxylate-amine"/>
</dbReference>
<dbReference type="InterPro" id="IPR013815">
    <property type="entry name" value="ATP_grasp_subdomain_1"/>
</dbReference>
<dbReference type="InterPro" id="IPR016185">
    <property type="entry name" value="PreATP-grasp_dom_sf"/>
</dbReference>
<dbReference type="InterPro" id="IPR005862">
    <property type="entry name" value="PurT"/>
</dbReference>
<dbReference type="InterPro" id="IPR054350">
    <property type="entry name" value="PurT/PurK_preATP-grasp"/>
</dbReference>
<dbReference type="InterPro" id="IPR048740">
    <property type="entry name" value="PurT_C"/>
</dbReference>
<dbReference type="InterPro" id="IPR011054">
    <property type="entry name" value="Rudment_hybrid_motif"/>
</dbReference>
<dbReference type="NCBIfam" id="NF006766">
    <property type="entry name" value="PRK09288.1"/>
    <property type="match status" value="1"/>
</dbReference>
<dbReference type="NCBIfam" id="TIGR01142">
    <property type="entry name" value="purT"/>
    <property type="match status" value="1"/>
</dbReference>
<dbReference type="PANTHER" id="PTHR43055">
    <property type="entry name" value="FORMATE-DEPENDENT PHOSPHORIBOSYLGLYCINAMIDE FORMYLTRANSFERASE"/>
    <property type="match status" value="1"/>
</dbReference>
<dbReference type="PANTHER" id="PTHR43055:SF1">
    <property type="entry name" value="FORMATE-DEPENDENT PHOSPHORIBOSYLGLYCINAMIDE FORMYLTRANSFERASE"/>
    <property type="match status" value="1"/>
</dbReference>
<dbReference type="Pfam" id="PF02222">
    <property type="entry name" value="ATP-grasp"/>
    <property type="match status" value="1"/>
</dbReference>
<dbReference type="Pfam" id="PF21244">
    <property type="entry name" value="PurT_C"/>
    <property type="match status" value="1"/>
</dbReference>
<dbReference type="Pfam" id="PF22660">
    <property type="entry name" value="RS_preATP-grasp-like"/>
    <property type="match status" value="1"/>
</dbReference>
<dbReference type="SUPFAM" id="SSF56059">
    <property type="entry name" value="Glutathione synthetase ATP-binding domain-like"/>
    <property type="match status" value="1"/>
</dbReference>
<dbReference type="SUPFAM" id="SSF52440">
    <property type="entry name" value="PreATP-grasp domain"/>
    <property type="match status" value="1"/>
</dbReference>
<dbReference type="SUPFAM" id="SSF51246">
    <property type="entry name" value="Rudiment single hybrid motif"/>
    <property type="match status" value="1"/>
</dbReference>
<dbReference type="PROSITE" id="PS50975">
    <property type="entry name" value="ATP_GRASP"/>
    <property type="match status" value="1"/>
</dbReference>
<protein>
    <recommendedName>
        <fullName evidence="1">Formate-dependent phosphoribosylglycinamide formyltransferase</fullName>
        <ecNumber evidence="1">6.3.1.21</ecNumber>
    </recommendedName>
    <alternativeName>
        <fullName evidence="1">5'-phosphoribosylglycinamide transformylase 2</fullName>
    </alternativeName>
    <alternativeName>
        <fullName evidence="1">Formate-dependent GAR transformylase</fullName>
    </alternativeName>
    <alternativeName>
        <fullName evidence="1">GAR transformylase 2</fullName>
        <shortName evidence="1">GART 2</shortName>
    </alternativeName>
    <alternativeName>
        <fullName evidence="1">Non-folate glycinamide ribonucleotide transformylase</fullName>
    </alternativeName>
    <alternativeName>
        <fullName evidence="1">Phosphoribosylglycinamide formyltransferase 2</fullName>
    </alternativeName>
</protein>
<comment type="function">
    <text evidence="1">Involved in the de novo purine biosynthesis. Catalyzes the transfer of formate to 5-phospho-ribosyl-glycinamide (GAR), producing 5-phospho-ribosyl-N-formylglycinamide (FGAR). Formate is provided by PurU via hydrolysis of 10-formyl-tetrahydrofolate.</text>
</comment>
<comment type="catalytic activity">
    <reaction evidence="1">
        <text>N(1)-(5-phospho-beta-D-ribosyl)glycinamide + formate + ATP = N(2)-formyl-N(1)-(5-phospho-beta-D-ribosyl)glycinamide + ADP + phosphate + H(+)</text>
        <dbReference type="Rhea" id="RHEA:24829"/>
        <dbReference type="ChEBI" id="CHEBI:15378"/>
        <dbReference type="ChEBI" id="CHEBI:15740"/>
        <dbReference type="ChEBI" id="CHEBI:30616"/>
        <dbReference type="ChEBI" id="CHEBI:43474"/>
        <dbReference type="ChEBI" id="CHEBI:143788"/>
        <dbReference type="ChEBI" id="CHEBI:147286"/>
        <dbReference type="ChEBI" id="CHEBI:456216"/>
        <dbReference type="EC" id="6.3.1.21"/>
    </reaction>
    <physiologicalReaction direction="left-to-right" evidence="1">
        <dbReference type="Rhea" id="RHEA:24830"/>
    </physiologicalReaction>
</comment>
<comment type="pathway">
    <text evidence="1">Purine metabolism; IMP biosynthesis via de novo pathway; N(2)-formyl-N(1)-(5-phospho-D-ribosyl)glycinamide from N(1)-(5-phospho-D-ribosyl)glycinamide (formate route): step 1/1.</text>
</comment>
<comment type="subunit">
    <text evidence="1">Homodimer.</text>
</comment>
<comment type="similarity">
    <text evidence="1">Belongs to the PurK/PurT family.</text>
</comment>
<organism>
    <name type="scientific">Prochlorococcus marinus (strain NATL2A)</name>
    <dbReference type="NCBI Taxonomy" id="59920"/>
    <lineage>
        <taxon>Bacteria</taxon>
        <taxon>Bacillati</taxon>
        <taxon>Cyanobacteriota</taxon>
        <taxon>Cyanophyceae</taxon>
        <taxon>Synechococcales</taxon>
        <taxon>Prochlorococcaceae</taxon>
        <taxon>Prochlorococcus</taxon>
    </lineage>
</organism>
<name>PURT_PROMT</name>
<proteinExistence type="inferred from homology"/>